<comment type="function">
    <text evidence="1">Catalyzes the acyloin condensation reaction between C atoms 2 and 3 of pyruvate and glyceraldehyde 3-phosphate to yield 1-deoxy-D-xylulose-5-phosphate (DXP).</text>
</comment>
<comment type="catalytic activity">
    <reaction evidence="1">
        <text>D-glyceraldehyde 3-phosphate + pyruvate + H(+) = 1-deoxy-D-xylulose 5-phosphate + CO2</text>
        <dbReference type="Rhea" id="RHEA:12605"/>
        <dbReference type="ChEBI" id="CHEBI:15361"/>
        <dbReference type="ChEBI" id="CHEBI:15378"/>
        <dbReference type="ChEBI" id="CHEBI:16526"/>
        <dbReference type="ChEBI" id="CHEBI:57792"/>
        <dbReference type="ChEBI" id="CHEBI:59776"/>
        <dbReference type="EC" id="2.2.1.7"/>
    </reaction>
</comment>
<comment type="cofactor">
    <cofactor evidence="1">
        <name>Mg(2+)</name>
        <dbReference type="ChEBI" id="CHEBI:18420"/>
    </cofactor>
    <text evidence="1">Binds 1 Mg(2+) ion per subunit.</text>
</comment>
<comment type="cofactor">
    <cofactor evidence="1">
        <name>thiamine diphosphate</name>
        <dbReference type="ChEBI" id="CHEBI:58937"/>
    </cofactor>
    <text evidence="1">Binds 1 thiamine pyrophosphate per subunit.</text>
</comment>
<comment type="pathway">
    <text evidence="1">Metabolic intermediate biosynthesis; 1-deoxy-D-xylulose 5-phosphate biosynthesis; 1-deoxy-D-xylulose 5-phosphate from D-glyceraldehyde 3-phosphate and pyruvate: step 1/1.</text>
</comment>
<comment type="subunit">
    <text evidence="1">Homodimer.</text>
</comment>
<comment type="similarity">
    <text evidence="1">Belongs to the transketolase family. DXPS subfamily.</text>
</comment>
<keyword id="KW-0414">Isoprene biosynthesis</keyword>
<keyword id="KW-0460">Magnesium</keyword>
<keyword id="KW-0479">Metal-binding</keyword>
<keyword id="KW-0784">Thiamine biosynthesis</keyword>
<keyword id="KW-0786">Thiamine pyrophosphate</keyword>
<keyword id="KW-0808">Transferase</keyword>
<organism>
    <name type="scientific">Cyanothece sp. (strain PCC 7425 / ATCC 29141)</name>
    <dbReference type="NCBI Taxonomy" id="395961"/>
    <lineage>
        <taxon>Bacteria</taxon>
        <taxon>Bacillati</taxon>
        <taxon>Cyanobacteriota</taxon>
        <taxon>Cyanophyceae</taxon>
        <taxon>Gomontiellales</taxon>
        <taxon>Cyanothecaceae</taxon>
        <taxon>Cyanothece</taxon>
    </lineage>
</organism>
<accession>B8HWL8</accession>
<dbReference type="EC" id="2.2.1.7" evidence="1"/>
<dbReference type="EMBL" id="CP001344">
    <property type="protein sequence ID" value="ACL46444.1"/>
    <property type="molecule type" value="Genomic_DNA"/>
</dbReference>
<dbReference type="SMR" id="B8HWL8"/>
<dbReference type="STRING" id="395961.Cyan7425_4130"/>
<dbReference type="KEGG" id="cyn:Cyan7425_4130"/>
<dbReference type="eggNOG" id="COG1154">
    <property type="taxonomic scope" value="Bacteria"/>
</dbReference>
<dbReference type="HOGENOM" id="CLU_009227_1_4_3"/>
<dbReference type="OrthoDB" id="9803371at2"/>
<dbReference type="UniPathway" id="UPA00064">
    <property type="reaction ID" value="UER00091"/>
</dbReference>
<dbReference type="GO" id="GO:0005829">
    <property type="term" value="C:cytosol"/>
    <property type="evidence" value="ECO:0007669"/>
    <property type="project" value="TreeGrafter"/>
</dbReference>
<dbReference type="GO" id="GO:0008661">
    <property type="term" value="F:1-deoxy-D-xylulose-5-phosphate synthase activity"/>
    <property type="evidence" value="ECO:0007669"/>
    <property type="project" value="UniProtKB-UniRule"/>
</dbReference>
<dbReference type="GO" id="GO:0000287">
    <property type="term" value="F:magnesium ion binding"/>
    <property type="evidence" value="ECO:0007669"/>
    <property type="project" value="UniProtKB-UniRule"/>
</dbReference>
<dbReference type="GO" id="GO:0030976">
    <property type="term" value="F:thiamine pyrophosphate binding"/>
    <property type="evidence" value="ECO:0007669"/>
    <property type="project" value="UniProtKB-UniRule"/>
</dbReference>
<dbReference type="GO" id="GO:0052865">
    <property type="term" value="P:1-deoxy-D-xylulose 5-phosphate biosynthetic process"/>
    <property type="evidence" value="ECO:0007669"/>
    <property type="project" value="UniProtKB-UniPathway"/>
</dbReference>
<dbReference type="GO" id="GO:0019288">
    <property type="term" value="P:isopentenyl diphosphate biosynthetic process, methylerythritol 4-phosphate pathway"/>
    <property type="evidence" value="ECO:0007669"/>
    <property type="project" value="TreeGrafter"/>
</dbReference>
<dbReference type="GO" id="GO:0016114">
    <property type="term" value="P:terpenoid biosynthetic process"/>
    <property type="evidence" value="ECO:0007669"/>
    <property type="project" value="UniProtKB-UniRule"/>
</dbReference>
<dbReference type="GO" id="GO:0009228">
    <property type="term" value="P:thiamine biosynthetic process"/>
    <property type="evidence" value="ECO:0007669"/>
    <property type="project" value="UniProtKB-UniRule"/>
</dbReference>
<dbReference type="CDD" id="cd02007">
    <property type="entry name" value="TPP_DXS"/>
    <property type="match status" value="1"/>
</dbReference>
<dbReference type="CDD" id="cd07033">
    <property type="entry name" value="TPP_PYR_DXS_TK_like"/>
    <property type="match status" value="1"/>
</dbReference>
<dbReference type="FunFam" id="3.40.50.920:FF:000002">
    <property type="entry name" value="1-deoxy-D-xylulose-5-phosphate synthase"/>
    <property type="match status" value="1"/>
</dbReference>
<dbReference type="FunFam" id="3.40.50.970:FF:000005">
    <property type="entry name" value="1-deoxy-D-xylulose-5-phosphate synthase"/>
    <property type="match status" value="1"/>
</dbReference>
<dbReference type="Gene3D" id="3.40.50.920">
    <property type="match status" value="1"/>
</dbReference>
<dbReference type="Gene3D" id="3.40.50.970">
    <property type="match status" value="2"/>
</dbReference>
<dbReference type="HAMAP" id="MF_00315">
    <property type="entry name" value="DXP_synth"/>
    <property type="match status" value="1"/>
</dbReference>
<dbReference type="InterPro" id="IPR005477">
    <property type="entry name" value="Dxylulose-5-P_synthase"/>
</dbReference>
<dbReference type="InterPro" id="IPR029061">
    <property type="entry name" value="THDP-binding"/>
</dbReference>
<dbReference type="InterPro" id="IPR009014">
    <property type="entry name" value="Transketo_C/PFOR_II"/>
</dbReference>
<dbReference type="InterPro" id="IPR005475">
    <property type="entry name" value="Transketolase-like_Pyr-bd"/>
</dbReference>
<dbReference type="InterPro" id="IPR020826">
    <property type="entry name" value="Transketolase_BS"/>
</dbReference>
<dbReference type="InterPro" id="IPR033248">
    <property type="entry name" value="Transketolase_C"/>
</dbReference>
<dbReference type="InterPro" id="IPR049557">
    <property type="entry name" value="Transketolase_CS"/>
</dbReference>
<dbReference type="NCBIfam" id="TIGR00204">
    <property type="entry name" value="dxs"/>
    <property type="match status" value="1"/>
</dbReference>
<dbReference type="NCBIfam" id="NF003933">
    <property type="entry name" value="PRK05444.2-2"/>
    <property type="match status" value="1"/>
</dbReference>
<dbReference type="PANTHER" id="PTHR43322">
    <property type="entry name" value="1-D-DEOXYXYLULOSE 5-PHOSPHATE SYNTHASE-RELATED"/>
    <property type="match status" value="1"/>
</dbReference>
<dbReference type="PANTHER" id="PTHR43322:SF5">
    <property type="entry name" value="1-DEOXY-D-XYLULOSE-5-PHOSPHATE SYNTHASE, CHLOROPLASTIC"/>
    <property type="match status" value="1"/>
</dbReference>
<dbReference type="Pfam" id="PF13292">
    <property type="entry name" value="DXP_synthase_N"/>
    <property type="match status" value="1"/>
</dbReference>
<dbReference type="Pfam" id="PF02779">
    <property type="entry name" value="Transket_pyr"/>
    <property type="match status" value="1"/>
</dbReference>
<dbReference type="Pfam" id="PF02780">
    <property type="entry name" value="Transketolase_C"/>
    <property type="match status" value="1"/>
</dbReference>
<dbReference type="SMART" id="SM00861">
    <property type="entry name" value="Transket_pyr"/>
    <property type="match status" value="1"/>
</dbReference>
<dbReference type="SUPFAM" id="SSF52518">
    <property type="entry name" value="Thiamin diphosphate-binding fold (THDP-binding)"/>
    <property type="match status" value="2"/>
</dbReference>
<dbReference type="SUPFAM" id="SSF52922">
    <property type="entry name" value="TK C-terminal domain-like"/>
    <property type="match status" value="1"/>
</dbReference>
<dbReference type="PROSITE" id="PS00801">
    <property type="entry name" value="TRANSKETOLASE_1"/>
    <property type="match status" value="1"/>
</dbReference>
<dbReference type="PROSITE" id="PS00802">
    <property type="entry name" value="TRANSKETOLASE_2"/>
    <property type="match status" value="1"/>
</dbReference>
<feature type="chain" id="PRO_1000132929" description="1-deoxy-D-xylulose-5-phosphate synthase">
    <location>
        <begin position="1"/>
        <end position="632"/>
    </location>
</feature>
<feature type="binding site" evidence="1">
    <location>
        <position position="72"/>
    </location>
    <ligand>
        <name>thiamine diphosphate</name>
        <dbReference type="ChEBI" id="CHEBI:58937"/>
    </ligand>
</feature>
<feature type="binding site" evidence="1">
    <location>
        <begin position="113"/>
        <end position="115"/>
    </location>
    <ligand>
        <name>thiamine diphosphate</name>
        <dbReference type="ChEBI" id="CHEBI:58937"/>
    </ligand>
</feature>
<feature type="binding site" evidence="1">
    <location>
        <position position="144"/>
    </location>
    <ligand>
        <name>Mg(2+)</name>
        <dbReference type="ChEBI" id="CHEBI:18420"/>
    </ligand>
</feature>
<feature type="binding site" evidence="1">
    <location>
        <begin position="145"/>
        <end position="146"/>
    </location>
    <ligand>
        <name>thiamine diphosphate</name>
        <dbReference type="ChEBI" id="CHEBI:58937"/>
    </ligand>
</feature>
<feature type="binding site" evidence="1">
    <location>
        <position position="174"/>
    </location>
    <ligand>
        <name>Mg(2+)</name>
        <dbReference type="ChEBI" id="CHEBI:18420"/>
    </ligand>
</feature>
<feature type="binding site" evidence="1">
    <location>
        <position position="174"/>
    </location>
    <ligand>
        <name>thiamine diphosphate</name>
        <dbReference type="ChEBI" id="CHEBI:58937"/>
    </ligand>
</feature>
<feature type="binding site" evidence="1">
    <location>
        <position position="285"/>
    </location>
    <ligand>
        <name>thiamine diphosphate</name>
        <dbReference type="ChEBI" id="CHEBI:58937"/>
    </ligand>
</feature>
<feature type="binding site" evidence="1">
    <location>
        <position position="368"/>
    </location>
    <ligand>
        <name>thiamine diphosphate</name>
        <dbReference type="ChEBI" id="CHEBI:58937"/>
    </ligand>
</feature>
<evidence type="ECO:0000255" key="1">
    <source>
        <dbReference type="HAMAP-Rule" id="MF_00315"/>
    </source>
</evidence>
<name>DXS_CYAP4</name>
<gene>
    <name evidence="1" type="primary">dxs</name>
    <name type="ordered locus">Cyan7425_4130</name>
</gene>
<proteinExistence type="inferred from homology"/>
<reference key="1">
    <citation type="journal article" date="2011" name="MBio">
        <title>Novel metabolic attributes of the genus Cyanothece, comprising a group of unicellular nitrogen-fixing Cyanobacteria.</title>
        <authorList>
            <person name="Bandyopadhyay A."/>
            <person name="Elvitigala T."/>
            <person name="Welsh E."/>
            <person name="Stockel J."/>
            <person name="Liberton M."/>
            <person name="Min H."/>
            <person name="Sherman L.A."/>
            <person name="Pakrasi H.B."/>
        </authorList>
    </citation>
    <scope>NUCLEOTIDE SEQUENCE [LARGE SCALE GENOMIC DNA]</scope>
    <source>
        <strain>PCC 7425 / ATCC 29141</strain>
    </source>
</reference>
<sequence length="632" mass="68419">MHLSEITHPNQLHGLSIQELKQIARQIRDKHLETVAATGGHLGPGLGVVELTLGLYQTLDLDRDRVIWDVGHQAYPHKLLTGRYDRFHTLRQKDGVAGYLNRKESEFDHFGAGHASTSISAALGMALARDQRGETHKVVAIIGDGALTGGMSLEAINHAGHLPHTNLMVVLNDNEMSISPNVGALSRYLNKMRLNPQVQFITENLEEQIKHFVGDSITPELGRLKGGMKRLAVPKVGAVFEELGFTYVGPVDGHNLEELIATFNAAHKIPGPVLVHVATVKGKGYAIAEKDQVGYHAQNPFNLATGKAMPSSKPKPPSYSKVFGDTLTKLAEADSRIIGITAAMATGTGLDILQKHLPDQYIDVGIAEQHAVTMAAGLACEGMRPVVTIYSTFLQRAYDQIVHDVCIQSLPVLFCMDRAGIVGADGPTHQGMYDIAYLRCLPNMVLMAPKDEAELQQMLVTGINYMDGPIGLRYPRGNGYGVALMEEGWEPLPIGKAEVLRQGDDLLMLAYGSMVYPTLQAAEILREHGIAATVVNARFAKPLDTELILPLAEKLGRVVTVEEGCLIGGFGSAVLEALQDQEILVPVTRIGIPDILVEHATPDQSKAQLGLTSAQIAERVLAKTQQPAPSRV</sequence>
<protein>
    <recommendedName>
        <fullName evidence="1">1-deoxy-D-xylulose-5-phosphate synthase</fullName>
        <ecNumber evidence="1">2.2.1.7</ecNumber>
    </recommendedName>
    <alternativeName>
        <fullName evidence="1">1-deoxyxylulose-5-phosphate synthase</fullName>
        <shortName evidence="1">DXP synthase</shortName>
        <shortName evidence="1">DXPS</shortName>
    </alternativeName>
</protein>